<feature type="chain" id="PRO_1000114969" description="Probable disulfide formation protein">
    <location>
        <begin position="1"/>
        <end position="147"/>
    </location>
</feature>
<feature type="transmembrane region" description="Helical" evidence="1">
    <location>
        <begin position="9"/>
        <end position="28"/>
    </location>
</feature>
<feature type="transmembrane region" description="Helical" evidence="1">
    <location>
        <begin position="43"/>
        <end position="62"/>
    </location>
</feature>
<feature type="transmembrane region" description="Helical" evidence="1">
    <location>
        <begin position="69"/>
        <end position="86"/>
    </location>
</feature>
<feature type="transmembrane region" description="Helical" evidence="1">
    <location>
        <begin position="115"/>
        <end position="138"/>
    </location>
</feature>
<feature type="disulfide bond" description="Redox-active" evidence="1">
    <location>
        <begin position="38"/>
        <end position="41"/>
    </location>
</feature>
<feature type="disulfide bond" description="Redox-active" evidence="1">
    <location>
        <begin position="99"/>
        <end position="106"/>
    </location>
</feature>
<organism>
    <name type="scientific">Coxiella burnetii (strain CbuK_Q154)</name>
    <name type="common">Coxiella burnetii (strain Q154)</name>
    <dbReference type="NCBI Taxonomy" id="434924"/>
    <lineage>
        <taxon>Bacteria</taxon>
        <taxon>Pseudomonadati</taxon>
        <taxon>Pseudomonadota</taxon>
        <taxon>Gammaproteobacteria</taxon>
        <taxon>Legionellales</taxon>
        <taxon>Coxiellaceae</taxon>
        <taxon>Coxiella</taxon>
    </lineage>
</organism>
<sequence length="147" mass="16866">MMVFRLLKNYSLYFAWLTALIATLGSLYLSLVRHIPVCDLCWYQRVCIYPLTILLGIAAYRTDRGVVKYALPLVVLGFLFSIYQYLQQMIPGFAPINLCGSTSPHCSEIHWEIFGFITLPFLGMLATLIMSFFLIMAFYSLDKRLAN</sequence>
<evidence type="ECO:0000255" key="1">
    <source>
        <dbReference type="HAMAP-Rule" id="MF_00287"/>
    </source>
</evidence>
<accession>B6J6V9</accession>
<name>BDBC_COXB1</name>
<gene>
    <name type="ordered locus">CbuK_0753</name>
</gene>
<dbReference type="EMBL" id="CP001020">
    <property type="protein sequence ID" value="ACJ20008.1"/>
    <property type="molecule type" value="Genomic_DNA"/>
</dbReference>
<dbReference type="RefSeq" id="WP_012570717.1">
    <property type="nucleotide sequence ID" value="NC_011528.1"/>
</dbReference>
<dbReference type="KEGG" id="cbc:CbuK_0753"/>
<dbReference type="HOGENOM" id="CLU_128688_0_0_6"/>
<dbReference type="GO" id="GO:0005886">
    <property type="term" value="C:plasma membrane"/>
    <property type="evidence" value="ECO:0007669"/>
    <property type="project" value="UniProtKB-SubCell"/>
</dbReference>
<dbReference type="GO" id="GO:0015035">
    <property type="term" value="F:protein-disulfide reductase activity"/>
    <property type="evidence" value="ECO:0007669"/>
    <property type="project" value="UniProtKB-UniRule"/>
</dbReference>
<dbReference type="GO" id="GO:0006457">
    <property type="term" value="P:protein folding"/>
    <property type="evidence" value="ECO:0007669"/>
    <property type="project" value="InterPro"/>
</dbReference>
<dbReference type="Gene3D" id="1.20.1550.10">
    <property type="entry name" value="DsbB-like"/>
    <property type="match status" value="1"/>
</dbReference>
<dbReference type="HAMAP" id="MF_00287">
    <property type="entry name" value="BdbC"/>
    <property type="match status" value="1"/>
</dbReference>
<dbReference type="InterPro" id="IPR003752">
    <property type="entry name" value="DiS_bond_form_DsbB/BdbC"/>
</dbReference>
<dbReference type="InterPro" id="IPR012187">
    <property type="entry name" value="Disulphide_bond_form_BdbC"/>
</dbReference>
<dbReference type="InterPro" id="IPR023380">
    <property type="entry name" value="DsbB-like_sf"/>
</dbReference>
<dbReference type="PANTHER" id="PTHR43469">
    <property type="entry name" value="DISULFIDE FORMATION PROTEIN-RELATED"/>
    <property type="match status" value="1"/>
</dbReference>
<dbReference type="PANTHER" id="PTHR43469:SF1">
    <property type="entry name" value="SPBETA PROPHAGE-DERIVED DISULFIDE BOND FORMATION PROTEIN B"/>
    <property type="match status" value="1"/>
</dbReference>
<dbReference type="Pfam" id="PF02600">
    <property type="entry name" value="DsbB"/>
    <property type="match status" value="1"/>
</dbReference>
<dbReference type="PIRSF" id="PIRSF036659">
    <property type="entry name" value="BdbC"/>
    <property type="match status" value="1"/>
</dbReference>
<dbReference type="SUPFAM" id="SSF158442">
    <property type="entry name" value="DsbB-like"/>
    <property type="match status" value="1"/>
</dbReference>
<keyword id="KW-0997">Cell inner membrane</keyword>
<keyword id="KW-1003">Cell membrane</keyword>
<keyword id="KW-0143">Chaperone</keyword>
<keyword id="KW-1015">Disulfide bond</keyword>
<keyword id="KW-0249">Electron transport</keyword>
<keyword id="KW-0472">Membrane</keyword>
<keyword id="KW-0560">Oxidoreductase</keyword>
<keyword id="KW-0676">Redox-active center</keyword>
<keyword id="KW-0812">Transmembrane</keyword>
<keyword id="KW-1133">Transmembrane helix</keyword>
<keyword id="KW-0813">Transport</keyword>
<reference key="1">
    <citation type="journal article" date="2009" name="Infect. Immun.">
        <title>Comparative genomics reveal extensive transposon-mediated genomic plasticity and diversity among potential effector proteins within the genus Coxiella.</title>
        <authorList>
            <person name="Beare P.A."/>
            <person name="Unsworth N."/>
            <person name="Andoh M."/>
            <person name="Voth D.E."/>
            <person name="Omsland A."/>
            <person name="Gilk S.D."/>
            <person name="Williams K.P."/>
            <person name="Sobral B.W."/>
            <person name="Kupko J.J. III"/>
            <person name="Porcella S.F."/>
            <person name="Samuel J.E."/>
            <person name="Heinzen R.A."/>
        </authorList>
    </citation>
    <scope>NUCLEOTIDE SEQUENCE [LARGE SCALE GENOMIC DNA]</scope>
    <source>
        <strain>CbuK_Q154</strain>
    </source>
</reference>
<proteinExistence type="inferred from homology"/>
<comment type="function">
    <text evidence="1">Required for disulfide bond formation in some proteins.</text>
</comment>
<comment type="subcellular location">
    <subcellularLocation>
        <location evidence="1">Cell inner membrane</location>
        <topology evidence="1">Multi-pass membrane protein</topology>
    </subcellularLocation>
</comment>
<comment type="similarity">
    <text evidence="1">Belongs to the DsbB family. BdbC subfamily.</text>
</comment>
<protein>
    <recommendedName>
        <fullName evidence="1">Probable disulfide formation protein</fullName>
    </recommendedName>
    <alternativeName>
        <fullName evidence="1">Disulfide oxidoreductase</fullName>
    </alternativeName>
    <alternativeName>
        <fullName evidence="1">Thiol-disulfide oxidoreductase</fullName>
    </alternativeName>
</protein>